<name>NPRE_BACCE</name>
<feature type="signal peptide" evidence="1">
    <location>
        <begin position="1"/>
        <end position="27"/>
    </location>
</feature>
<feature type="propeptide" id="PRO_0000028598" description="Activation peptide" evidence="4">
    <location>
        <begin position="28"/>
        <end position="249"/>
    </location>
</feature>
<feature type="chain" id="PRO_0000028599" description="Bacillolysin">
    <location>
        <begin position="250"/>
        <end position="566"/>
    </location>
</feature>
<feature type="active site">
    <location>
        <position position="393"/>
    </location>
</feature>
<feature type="active site" description="Proton donor">
    <location>
        <position position="481"/>
    </location>
</feature>
<feature type="binding site" evidence="3">
    <location>
        <position position="307"/>
    </location>
    <ligand>
        <name>Ca(2+)</name>
        <dbReference type="ChEBI" id="CHEBI:29108"/>
        <label>1</label>
    </ligand>
</feature>
<feature type="binding site" evidence="3">
    <location>
        <position position="309"/>
    </location>
    <ligand>
        <name>Ca(2+)</name>
        <dbReference type="ChEBI" id="CHEBI:29108"/>
        <label>1</label>
    </ligand>
</feature>
<feature type="binding site">
    <location>
        <position position="311"/>
    </location>
    <ligand>
        <name>Ca(2+)</name>
        <dbReference type="ChEBI" id="CHEBI:29108"/>
        <label>1</label>
    </ligand>
</feature>
<feature type="binding site" evidence="3">
    <location>
        <position position="388"/>
    </location>
    <ligand>
        <name>Ca(2+)</name>
        <dbReference type="ChEBI" id="CHEBI:29108"/>
        <label>2</label>
    </ligand>
</feature>
<feature type="binding site" evidence="2 3">
    <location>
        <position position="392"/>
    </location>
    <ligand>
        <name>Zn(2+)</name>
        <dbReference type="ChEBI" id="CHEBI:29105"/>
        <note>catalytic</note>
    </ligand>
</feature>
<feature type="binding site" evidence="2 3">
    <location>
        <position position="396"/>
    </location>
    <ligand>
        <name>Zn(2+)</name>
        <dbReference type="ChEBI" id="CHEBI:29105"/>
        <note>catalytic</note>
    </ligand>
</feature>
<feature type="binding site" evidence="2 3">
    <location>
        <position position="416"/>
    </location>
    <ligand>
        <name>Zn(2+)</name>
        <dbReference type="ChEBI" id="CHEBI:29105"/>
        <note>catalytic</note>
    </ligand>
</feature>
<feature type="binding site" evidence="3">
    <location>
        <position position="427"/>
    </location>
    <ligand>
        <name>Ca(2+)</name>
        <dbReference type="ChEBI" id="CHEBI:29108"/>
        <label>2</label>
    </ligand>
</feature>
<feature type="binding site" evidence="3">
    <location>
        <position position="427"/>
    </location>
    <ligand>
        <name>Ca(2+)</name>
        <dbReference type="ChEBI" id="CHEBI:29108"/>
        <label>3</label>
    </ligand>
</feature>
<feature type="binding site">
    <location>
        <position position="433"/>
    </location>
    <ligand>
        <name>Ca(2+)</name>
        <dbReference type="ChEBI" id="CHEBI:29108"/>
        <label>3</label>
    </ligand>
</feature>
<feature type="binding site" evidence="3">
    <location>
        <position position="435"/>
    </location>
    <ligand>
        <name>Ca(2+)</name>
        <dbReference type="ChEBI" id="CHEBI:29108"/>
        <label>2</label>
    </ligand>
</feature>
<feature type="binding site" evidence="3">
    <location>
        <position position="435"/>
    </location>
    <ligand>
        <name>Ca(2+)</name>
        <dbReference type="ChEBI" id="CHEBI:29108"/>
        <label>3</label>
    </ligand>
</feature>
<feature type="binding site">
    <location>
        <position position="437"/>
    </location>
    <ligand>
        <name>Ca(2+)</name>
        <dbReference type="ChEBI" id="CHEBI:29108"/>
        <label>2</label>
    </ligand>
</feature>
<feature type="binding site" evidence="3">
    <location>
        <position position="440"/>
    </location>
    <ligand>
        <name>Ca(2+)</name>
        <dbReference type="ChEBI" id="CHEBI:29108"/>
        <label>2</label>
    </ligand>
</feature>
<feature type="binding site" evidence="3">
    <location>
        <position position="440"/>
    </location>
    <ligand>
        <name>Ca(2+)</name>
        <dbReference type="ChEBI" id="CHEBI:29108"/>
        <label>3</label>
    </ligand>
</feature>
<feature type="binding site">
    <location>
        <position position="443"/>
    </location>
    <ligand>
        <name>Ca(2+)</name>
        <dbReference type="ChEBI" id="CHEBI:29108"/>
        <label>4</label>
    </ligand>
</feature>
<feature type="binding site" evidence="3">
    <location>
        <position position="444"/>
    </location>
    <ligand>
        <name>Ca(2+)</name>
        <dbReference type="ChEBI" id="CHEBI:29108"/>
        <label>4</label>
    </ligand>
</feature>
<feature type="binding site">
    <location>
        <position position="447"/>
    </location>
    <ligand>
        <name>Ca(2+)</name>
        <dbReference type="ChEBI" id="CHEBI:29108"/>
        <label>4</label>
    </ligand>
</feature>
<feature type="binding site" evidence="3">
    <location>
        <position position="450"/>
    </location>
    <ligand>
        <name>Ca(2+)</name>
        <dbReference type="ChEBI" id="CHEBI:29108"/>
        <label>4</label>
    </ligand>
</feature>
<feature type="strand" evidence="7">
    <location>
        <begin position="253"/>
        <end position="260"/>
    </location>
</feature>
<feature type="strand" evidence="7">
    <location>
        <begin position="266"/>
        <end position="274"/>
    </location>
</feature>
<feature type="strand" evidence="7">
    <location>
        <begin position="277"/>
        <end position="282"/>
    </location>
</feature>
<feature type="strand" evidence="7">
    <location>
        <begin position="284"/>
        <end position="287"/>
    </location>
</feature>
<feature type="strand" evidence="7">
    <location>
        <begin position="289"/>
        <end position="298"/>
    </location>
</feature>
<feature type="strand" evidence="7">
    <location>
        <begin position="306"/>
        <end position="312"/>
    </location>
</feature>
<feature type="helix" evidence="7">
    <location>
        <begin position="315"/>
        <end position="317"/>
    </location>
</feature>
<feature type="helix" evidence="7">
    <location>
        <begin position="318"/>
        <end position="338"/>
    </location>
</feature>
<feature type="turn" evidence="7">
    <location>
        <begin position="342"/>
        <end position="345"/>
    </location>
</feature>
<feature type="strand" evidence="7">
    <location>
        <begin position="350"/>
        <end position="359"/>
    </location>
</feature>
<feature type="strand" evidence="7">
    <location>
        <begin position="363"/>
        <end position="365"/>
    </location>
</feature>
<feature type="strand" evidence="7">
    <location>
        <begin position="367"/>
        <end position="372"/>
    </location>
</feature>
<feature type="strand" evidence="7">
    <location>
        <begin position="377"/>
        <end position="380"/>
    </location>
</feature>
<feature type="helix" evidence="7">
    <location>
        <begin position="383"/>
        <end position="385"/>
    </location>
</feature>
<feature type="helix" evidence="7">
    <location>
        <begin position="387"/>
        <end position="400"/>
    </location>
</feature>
<feature type="turn" evidence="7">
    <location>
        <begin position="401"/>
        <end position="403"/>
    </location>
</feature>
<feature type="helix" evidence="7">
    <location>
        <begin position="409"/>
        <end position="429"/>
    </location>
</feature>
<feature type="strand" evidence="7">
    <location>
        <begin position="436"/>
        <end position="439"/>
    </location>
</feature>
<feature type="turn" evidence="7">
    <location>
        <begin position="440"/>
        <end position="442"/>
    </location>
</feature>
<feature type="strand" evidence="6">
    <location>
        <begin position="445"/>
        <end position="447"/>
    </location>
</feature>
<feature type="strand" evidence="7">
    <location>
        <begin position="452"/>
        <end position="456"/>
    </location>
</feature>
<feature type="helix" evidence="7">
    <location>
        <begin position="458"/>
        <end position="461"/>
    </location>
</feature>
<feature type="helix" evidence="7">
    <location>
        <begin position="467"/>
        <end position="469"/>
    </location>
</feature>
<feature type="helix" evidence="7">
    <location>
        <begin position="475"/>
        <end position="496"/>
    </location>
</feature>
<feature type="strand" evidence="7">
    <location>
        <begin position="498"/>
        <end position="500"/>
    </location>
</feature>
<feature type="strand" evidence="7">
    <location>
        <begin position="503"/>
        <end position="505"/>
    </location>
</feature>
<feature type="helix" evidence="7">
    <location>
        <begin position="510"/>
        <end position="523"/>
    </location>
</feature>
<feature type="helix" evidence="7">
    <location>
        <begin position="531"/>
        <end position="546"/>
    </location>
</feature>
<feature type="helix" evidence="7">
    <location>
        <begin position="551"/>
        <end position="562"/>
    </location>
</feature>
<keyword id="KW-0002">3D-structure</keyword>
<keyword id="KW-0106">Calcium</keyword>
<keyword id="KW-0903">Direct protein sequencing</keyword>
<keyword id="KW-0378">Hydrolase</keyword>
<keyword id="KW-0479">Metal-binding</keyword>
<keyword id="KW-0482">Metalloprotease</keyword>
<keyword id="KW-0645">Protease</keyword>
<keyword id="KW-0964">Secreted</keyword>
<keyword id="KW-0732">Signal</keyword>
<keyword id="KW-0862">Zinc</keyword>
<protein>
    <recommendedName>
        <fullName>Bacillolysin</fullName>
        <ecNumber>3.4.24.28</ecNumber>
    </recommendedName>
    <alternativeName>
        <fullName>Neutral protease</fullName>
    </alternativeName>
</protein>
<dbReference type="EC" id="3.4.24.28"/>
<dbReference type="EMBL" id="M83910">
    <property type="protein sequence ID" value="AAA22620.1"/>
    <property type="molecule type" value="Genomic_DNA"/>
</dbReference>
<dbReference type="PIR" id="S22690">
    <property type="entry name" value="HYBSU"/>
</dbReference>
<dbReference type="RefSeq" id="WP_000730369.1">
    <property type="nucleotide sequence ID" value="NZ_VSSM01000006.1"/>
</dbReference>
<dbReference type="PDB" id="1ESP">
    <property type="method" value="X-ray"/>
    <property type="resolution" value="2.80 A"/>
    <property type="chains" value="A=250-566"/>
</dbReference>
<dbReference type="PDB" id="1NPC">
    <property type="method" value="X-ray"/>
    <property type="resolution" value="2.00 A"/>
    <property type="chains" value="A=250-566"/>
</dbReference>
<dbReference type="PDBsum" id="1ESP"/>
<dbReference type="PDBsum" id="1NPC"/>
<dbReference type="SMR" id="P05806"/>
<dbReference type="MEROPS" id="M04.001"/>
<dbReference type="PATRIC" id="fig|1396.444.peg.2749"/>
<dbReference type="eggNOG" id="COG3227">
    <property type="taxonomic scope" value="Bacteria"/>
</dbReference>
<dbReference type="EvolutionaryTrace" id="P05806"/>
<dbReference type="GO" id="GO:0005576">
    <property type="term" value="C:extracellular region"/>
    <property type="evidence" value="ECO:0007669"/>
    <property type="project" value="UniProtKB-SubCell"/>
</dbReference>
<dbReference type="GO" id="GO:0046872">
    <property type="term" value="F:metal ion binding"/>
    <property type="evidence" value="ECO:0007669"/>
    <property type="project" value="UniProtKB-KW"/>
</dbReference>
<dbReference type="GO" id="GO:0004222">
    <property type="term" value="F:metalloendopeptidase activity"/>
    <property type="evidence" value="ECO:0007669"/>
    <property type="project" value="InterPro"/>
</dbReference>
<dbReference type="GO" id="GO:0006508">
    <property type="term" value="P:proteolysis"/>
    <property type="evidence" value="ECO:0007669"/>
    <property type="project" value="UniProtKB-KW"/>
</dbReference>
<dbReference type="CDD" id="cd09597">
    <property type="entry name" value="M4_TLP"/>
    <property type="match status" value="1"/>
</dbReference>
<dbReference type="FunFam" id="3.10.170.10:FF:000001">
    <property type="entry name" value="Peptidase M4"/>
    <property type="match status" value="1"/>
</dbReference>
<dbReference type="FunFam" id="1.10.390.10:FF:000012">
    <property type="entry name" value="Thermolysin"/>
    <property type="match status" value="1"/>
</dbReference>
<dbReference type="Gene3D" id="3.10.170.10">
    <property type="match status" value="1"/>
</dbReference>
<dbReference type="Gene3D" id="3.10.450.40">
    <property type="match status" value="1"/>
</dbReference>
<dbReference type="Gene3D" id="3.10.450.490">
    <property type="match status" value="1"/>
</dbReference>
<dbReference type="Gene3D" id="1.10.390.10">
    <property type="entry name" value="Neutral Protease Domain 2"/>
    <property type="match status" value="1"/>
</dbReference>
<dbReference type="InterPro" id="IPR011096">
    <property type="entry name" value="FTP_domain"/>
</dbReference>
<dbReference type="InterPro" id="IPR025711">
    <property type="entry name" value="PepSY"/>
</dbReference>
<dbReference type="InterPro" id="IPR023612">
    <property type="entry name" value="Peptidase_M4"/>
</dbReference>
<dbReference type="InterPro" id="IPR027268">
    <property type="entry name" value="Peptidase_M4/M1_CTD_sf"/>
</dbReference>
<dbReference type="InterPro" id="IPR001570">
    <property type="entry name" value="Peptidase_M4_C_domain"/>
</dbReference>
<dbReference type="InterPro" id="IPR013856">
    <property type="entry name" value="Peptidase_M4_domain"/>
</dbReference>
<dbReference type="InterPro" id="IPR050728">
    <property type="entry name" value="Zinc_Metalloprotease_M4"/>
</dbReference>
<dbReference type="PANTHER" id="PTHR33794">
    <property type="entry name" value="BACILLOLYSIN"/>
    <property type="match status" value="1"/>
</dbReference>
<dbReference type="PANTHER" id="PTHR33794:SF3">
    <property type="entry name" value="NEUTRAL PROTEASE B"/>
    <property type="match status" value="1"/>
</dbReference>
<dbReference type="Pfam" id="PF07504">
    <property type="entry name" value="FTP"/>
    <property type="match status" value="1"/>
</dbReference>
<dbReference type="Pfam" id="PF03413">
    <property type="entry name" value="PepSY"/>
    <property type="match status" value="1"/>
</dbReference>
<dbReference type="Pfam" id="PF01447">
    <property type="entry name" value="Peptidase_M4"/>
    <property type="match status" value="1"/>
</dbReference>
<dbReference type="Pfam" id="PF02868">
    <property type="entry name" value="Peptidase_M4_C"/>
    <property type="match status" value="1"/>
</dbReference>
<dbReference type="PRINTS" id="PR00730">
    <property type="entry name" value="THERMOLYSIN"/>
</dbReference>
<dbReference type="SUPFAM" id="SSF55486">
    <property type="entry name" value="Metalloproteases ('zincins'), catalytic domain"/>
    <property type="match status" value="1"/>
</dbReference>
<dbReference type="PROSITE" id="PS00142">
    <property type="entry name" value="ZINC_PROTEASE"/>
    <property type="match status" value="1"/>
</dbReference>
<evidence type="ECO:0000255" key="1"/>
<evidence type="ECO:0000255" key="2">
    <source>
        <dbReference type="PROSITE-ProRule" id="PRU10095"/>
    </source>
</evidence>
<evidence type="ECO:0000269" key="3">
    <source>
    </source>
</evidence>
<evidence type="ECO:0000269" key="4">
    <source>
    </source>
</evidence>
<evidence type="ECO:0000305" key="5"/>
<evidence type="ECO:0007829" key="6">
    <source>
        <dbReference type="PDB" id="1ESP"/>
    </source>
</evidence>
<evidence type="ECO:0007829" key="7">
    <source>
        <dbReference type="PDB" id="1NPC"/>
    </source>
</evidence>
<accession>P05806</accession>
<reference key="1">
    <citation type="journal article" date="1992" name="Mol. Microbiol.">
        <title>The role of the pro-sequence in the processing and secretion of the thermolysin-like neutral protease from Bacillus cereus.</title>
        <authorList>
            <person name="Wetmore D.R."/>
            <person name="Wong S.L."/>
            <person name="Roche R.S."/>
        </authorList>
    </citation>
    <scope>NUCLEOTIDE SEQUENCE [GENOMIC DNA]</scope>
</reference>
<reference key="2">
    <citation type="journal article" date="1986" name="Biol. Chem. Hoppe-Seyler">
        <title>The primary structure of Bacillus cereus neutral proteinase and comparison with thermolysin and Bacillus subtilis neutral proteinase.</title>
        <authorList>
            <person name="Sidler W."/>
            <person name="Niederer E."/>
            <person name="Suter F."/>
            <person name="Zuber H."/>
        </authorList>
    </citation>
    <scope>PROTEIN SEQUENCE OF 250-566</scope>
    <source>
        <strain>DSM 3101 / x-3</strain>
    </source>
</reference>
<reference key="3">
    <citation type="journal article" date="1988" name="J. Mol. Biol.">
        <title>Crystal structure of neutral protease from Bacillus cereus refined at 3.0-A resolution and comparison with the homologous but more thermostable enzyme thermolysin.</title>
        <authorList>
            <person name="Pauptit R.A."/>
            <person name="Karlsson R."/>
            <person name="Picot D."/>
            <person name="Jenkins J.A."/>
            <person name="Niklaus-Reimer A.-S."/>
            <person name="Jansonius J.N."/>
        </authorList>
    </citation>
    <scope>X-RAY CRYSTALLOGRAPHY (3.0 ANGSTROMS)</scope>
</reference>
<reference key="4">
    <citation type="journal article" date="1992" name="Eur. J. Biochem.">
        <title>The structure of neutral protease from Bacillus cereus at 0.2-nm resolution.</title>
        <authorList>
            <person name="Stark W."/>
            <person name="Pauptit R.A."/>
            <person name="Wilson K.S."/>
            <person name="Jansonius J.N."/>
        </authorList>
    </citation>
    <scope>X-RAY CRYSTALLOGRAPHY (2.0 ANGSTROMS)</scope>
</reference>
<reference key="5">
    <citation type="journal article" date="1996" name="Acta Crystallogr. D">
        <title>E144S active-site mutant of the Bacillus cereus thermolysin-like neutral protease at 2.8-A resolution.</title>
        <authorList>
            <person name="Lister S.A."/>
            <person name="Wetmore D.R."/>
            <person name="Roche R.S."/>
            <person name="Codding P.W."/>
        </authorList>
    </citation>
    <scope>X-RAY CRYSTALLOGRAPHY (2.8 ANGSTROMS) OF MUTANT SER-393</scope>
</reference>
<sequence length="566" mass="60919">MKKKSLALVLATGMAVTTFGGTGSAFADSKNVLSTKKYNETVQSPEFISGDLTEATGKKAESVVFDYLNAAKGDYKLGEKSAQDSFKVKQVKKDAVTDSTVVRMQQVYEGVPVWGSTQVAHVSKDGSLKVLSGTVAPDLDKKEKLKNKNKIEGAKAIEIAQQDLGVTPKYEVEPKADLYVYQNGEETTYAYVVNLNFLDPSPGNYYYFIEADSGKVLNKFNTIDHVTNDDKSPVKQEAPKQDAKAVVKPVTGTNKVGTGKGVLGDTKSLNTTLSGSSYYLQDNTRGATIFTYDAKNRSTLPGTLWADADNVFNAAYDAAAVDAHYYAGKTYDYYKATFNRNSINDAGAPLKSTVHYGSNYNNAFWNGSQMVYGDGDGVTFTSLSGGIDVIGHELTHAVTENSSNLIYQNESGALNEAISDIFGTLVEFYDNRNPDWEIGEDIYTPGKAGDALRSMSDPTKYGDPDHYSKRYTGSSDNGGVHTNSGIINKQAYLLANGGTHYGVTVTGIGKDKLGAIYYRANTQYFTQSTTFSQARAGAVQAAADLYGANSAEVAAVKQSFSAVGVN</sequence>
<organism>
    <name type="scientific">Bacillus cereus</name>
    <dbReference type="NCBI Taxonomy" id="1396"/>
    <lineage>
        <taxon>Bacteria</taxon>
        <taxon>Bacillati</taxon>
        <taxon>Bacillota</taxon>
        <taxon>Bacilli</taxon>
        <taxon>Bacillales</taxon>
        <taxon>Bacillaceae</taxon>
        <taxon>Bacillus</taxon>
        <taxon>Bacillus cereus group</taxon>
    </lineage>
</organism>
<proteinExistence type="evidence at protein level"/>
<gene>
    <name type="primary">npr</name>
    <name type="synonym">nprC</name>
</gene>
<comment type="function">
    <text>Extracellular zinc metalloprotease.</text>
</comment>
<comment type="catalytic activity">
    <reaction>
        <text>Similar, but not identical, to that of thermolysin.</text>
        <dbReference type="EC" id="3.4.24.28"/>
    </reaction>
</comment>
<comment type="cofactor">
    <cofactor>
        <name>Ca(2+)</name>
        <dbReference type="ChEBI" id="CHEBI:29108"/>
    </cofactor>
    <text>Binds 4 Ca(2+) ions per subunit.</text>
</comment>
<comment type="cofactor">
    <cofactor>
        <name>Zn(2+)</name>
        <dbReference type="ChEBI" id="CHEBI:29105"/>
    </cofactor>
    <text>Binds 1 zinc ion per subunit.</text>
</comment>
<comment type="biophysicochemical properties">
    <temperatureDependence>
        <text>Thermolabile.</text>
    </temperatureDependence>
</comment>
<comment type="subcellular location">
    <subcellularLocation>
        <location>Secreted</location>
    </subcellularLocation>
</comment>
<comment type="similarity">
    <text evidence="5">Belongs to the peptidase M4 family.</text>
</comment>